<protein>
    <recommendedName>
        <fullName>DegV domain-containing protein spyM18_0926</fullName>
    </recommendedName>
</protein>
<feature type="chain" id="PRO_0000209803" description="DegV domain-containing protein spyM18_0926">
    <location>
        <begin position="1"/>
        <end position="282"/>
    </location>
</feature>
<feature type="domain" description="DegV" evidence="3">
    <location>
        <begin position="3"/>
        <end position="280"/>
    </location>
</feature>
<feature type="binding site" evidence="2">
    <location>
        <position position="61"/>
    </location>
    <ligand>
        <name>hexadecanoate</name>
        <dbReference type="ChEBI" id="CHEBI:7896"/>
    </ligand>
</feature>
<feature type="binding site" evidence="2">
    <location>
        <position position="94"/>
    </location>
    <ligand>
        <name>hexadecanoate</name>
        <dbReference type="ChEBI" id="CHEBI:7896"/>
    </ligand>
</feature>
<name>Y926_STRP8</name>
<gene>
    <name type="ordered locus">spyM18_0926</name>
</gene>
<comment type="function">
    <text evidence="1">May bind long-chain fatty acids, such as palmitate, and may play a role in lipid transport or fatty acid metabolism.</text>
</comment>
<organism>
    <name type="scientific">Streptococcus pyogenes serotype M18 (strain MGAS8232)</name>
    <dbReference type="NCBI Taxonomy" id="186103"/>
    <lineage>
        <taxon>Bacteria</taxon>
        <taxon>Bacillati</taxon>
        <taxon>Bacillota</taxon>
        <taxon>Bacilli</taxon>
        <taxon>Lactobacillales</taxon>
        <taxon>Streptococcaceae</taxon>
        <taxon>Streptococcus</taxon>
    </lineage>
</organism>
<accession>Q8P1E4</accession>
<reference key="1">
    <citation type="journal article" date="2002" name="Proc. Natl. Acad. Sci. U.S.A.">
        <title>Genome sequence and comparative microarray analysis of serotype M18 group A Streptococcus strains associated with acute rheumatic fever outbreaks.</title>
        <authorList>
            <person name="Smoot J.C."/>
            <person name="Barbian K.D."/>
            <person name="Van Gompel J.J."/>
            <person name="Smoot L.M."/>
            <person name="Chaussee M.S."/>
            <person name="Sylva G.L."/>
            <person name="Sturdevant D.E."/>
            <person name="Ricklefs S.M."/>
            <person name="Porcella S.F."/>
            <person name="Parkins L.D."/>
            <person name="Beres S.B."/>
            <person name="Campbell D.S."/>
            <person name="Smith T.M."/>
            <person name="Zhang Q."/>
            <person name="Kapur V."/>
            <person name="Daly J.A."/>
            <person name="Veasy L.G."/>
            <person name="Musser J.M."/>
        </authorList>
    </citation>
    <scope>NUCLEOTIDE SEQUENCE [LARGE SCALE GENOMIC DNA]</scope>
    <source>
        <strain>MGAS8232</strain>
    </source>
</reference>
<dbReference type="EMBL" id="AE009949">
    <property type="protein sequence ID" value="AAL97570.1"/>
    <property type="molecule type" value="Genomic_DNA"/>
</dbReference>
<dbReference type="RefSeq" id="WP_011017667.1">
    <property type="nucleotide sequence ID" value="NC_003485.1"/>
</dbReference>
<dbReference type="SMR" id="Q8P1E4"/>
<dbReference type="KEGG" id="spm:spyM18_0926"/>
<dbReference type="HOGENOM" id="CLU_048251_3_1_9"/>
<dbReference type="GO" id="GO:0008289">
    <property type="term" value="F:lipid binding"/>
    <property type="evidence" value="ECO:0007669"/>
    <property type="project" value="UniProtKB-KW"/>
</dbReference>
<dbReference type="Gene3D" id="3.30.1180.10">
    <property type="match status" value="1"/>
</dbReference>
<dbReference type="Gene3D" id="3.40.50.10170">
    <property type="match status" value="1"/>
</dbReference>
<dbReference type="InterPro" id="IPR003797">
    <property type="entry name" value="DegV"/>
</dbReference>
<dbReference type="InterPro" id="IPR043168">
    <property type="entry name" value="DegV_C"/>
</dbReference>
<dbReference type="InterPro" id="IPR050270">
    <property type="entry name" value="DegV_domain_contain"/>
</dbReference>
<dbReference type="NCBIfam" id="TIGR00762">
    <property type="entry name" value="DegV"/>
    <property type="match status" value="1"/>
</dbReference>
<dbReference type="PANTHER" id="PTHR33434">
    <property type="entry name" value="DEGV DOMAIN-CONTAINING PROTEIN DR_1986-RELATED"/>
    <property type="match status" value="1"/>
</dbReference>
<dbReference type="PANTHER" id="PTHR33434:SF2">
    <property type="entry name" value="FATTY ACID-BINDING PROTEIN TM_1468"/>
    <property type="match status" value="1"/>
</dbReference>
<dbReference type="Pfam" id="PF02645">
    <property type="entry name" value="DegV"/>
    <property type="match status" value="1"/>
</dbReference>
<dbReference type="SUPFAM" id="SSF82549">
    <property type="entry name" value="DAK1/DegV-like"/>
    <property type="match status" value="1"/>
</dbReference>
<dbReference type="PROSITE" id="PS51482">
    <property type="entry name" value="DEGV"/>
    <property type="match status" value="1"/>
</dbReference>
<evidence type="ECO:0000250" key="1"/>
<evidence type="ECO:0000250" key="2">
    <source>
        <dbReference type="UniProtKB" id="Q9X1H9"/>
    </source>
</evidence>
<evidence type="ECO:0000255" key="3">
    <source>
        <dbReference type="PROSITE-ProRule" id="PRU00815"/>
    </source>
</evidence>
<keyword id="KW-0446">Lipid-binding</keyword>
<sequence length="282" mass="31389">MKLAVITDSTATLPIDLKQDKAIFSLDIPVIIDDETYFEGRNLSIDDFYQKMADSQNLPKTSQPSLSELDNLLGLLSSKGYTHVIGLFLAGGISGFWQNIQFLAEEHPEIEMAFPDSKITSAPLGSMVKNVLDWSRQGMTFQAILNKLQEQIDRTTAFIMVDDLNHLVKGGRLSNGSALLGNLLSIKPILRFDEEGKIVVYEKVRTEKKAMKRLVEILNDLIADGQYNVSIIHSKAQDKADYLKRLLQDSGYQYDIEEVHFGAVIATHLGEGAIAFGVTPRL</sequence>
<proteinExistence type="inferred from homology"/>